<comment type="function">
    <text evidence="2">Component of the ubiquinol-cytochrome c reductase complex (complex III or cytochrome b-c1 complex) that is part of the mitochondrial respiratory chain. The b-c1 complex mediates electron transfer from ubiquinol to cytochrome c. Contributes to the generation of a proton gradient across the mitochondrial membrane that is then used for ATP synthesis.</text>
</comment>
<comment type="cofactor">
    <cofactor evidence="2">
        <name>heme b</name>
        <dbReference type="ChEBI" id="CHEBI:60344"/>
    </cofactor>
    <text evidence="2">Binds 2 heme b groups non-covalently.</text>
</comment>
<comment type="subunit">
    <text evidence="2">The cytochrome bc1 complex contains 11 subunits: 3 respiratory subunits (MT-CYB, CYC1 and UQCRFS1), 2 core proteins (UQCRC1 and UQCRC2) and 6 low-molecular weight proteins (UQCRH/QCR6, UQCRB/QCR7, UQCRQ/QCR8, UQCR10/QCR9, UQCR11/QCR10 and a cleavage product of UQCRFS1). This cytochrome bc1 complex then forms a dimer.</text>
</comment>
<comment type="subcellular location">
    <subcellularLocation>
        <location evidence="2">Mitochondrion inner membrane</location>
        <topology evidence="2">Multi-pass membrane protein</topology>
    </subcellularLocation>
</comment>
<comment type="miscellaneous">
    <text evidence="1">Heme 1 (or BL or b562) is low-potential and absorbs at about 562 nm, and heme 2 (or BH or b566) is high-potential and absorbs at about 566 nm.</text>
</comment>
<comment type="similarity">
    <text evidence="3 4">Belongs to the cytochrome b family.</text>
</comment>
<comment type="caution">
    <text evidence="2">The full-length protein contains only eight transmembrane helices, not nine as predicted by bioinformatics tools.</text>
</comment>
<geneLocation type="mitochondrion"/>
<proteinExistence type="inferred from homology"/>
<dbReference type="EMBL" id="AB085736">
    <property type="protein sequence ID" value="BAC16630.1"/>
    <property type="molecule type" value="Genomic_DNA"/>
</dbReference>
<dbReference type="EMBL" id="AB106604">
    <property type="protein sequence ID" value="BAC77810.1"/>
    <property type="molecule type" value="Genomic_DNA"/>
</dbReference>
<dbReference type="RefSeq" id="YP_008757884.1">
    <property type="nucleotide sequence ID" value="NC_022694.1"/>
</dbReference>
<dbReference type="SMR" id="Q8HQE8"/>
<dbReference type="GeneID" id="17427697"/>
<dbReference type="CTD" id="4519"/>
<dbReference type="GO" id="GO:0005743">
    <property type="term" value="C:mitochondrial inner membrane"/>
    <property type="evidence" value="ECO:0007669"/>
    <property type="project" value="UniProtKB-SubCell"/>
</dbReference>
<dbReference type="GO" id="GO:0045275">
    <property type="term" value="C:respiratory chain complex III"/>
    <property type="evidence" value="ECO:0007669"/>
    <property type="project" value="InterPro"/>
</dbReference>
<dbReference type="GO" id="GO:0046872">
    <property type="term" value="F:metal ion binding"/>
    <property type="evidence" value="ECO:0007669"/>
    <property type="project" value="UniProtKB-KW"/>
</dbReference>
<dbReference type="GO" id="GO:0008121">
    <property type="term" value="F:ubiquinol-cytochrome-c reductase activity"/>
    <property type="evidence" value="ECO:0007669"/>
    <property type="project" value="InterPro"/>
</dbReference>
<dbReference type="GO" id="GO:0006122">
    <property type="term" value="P:mitochondrial electron transport, ubiquinol to cytochrome c"/>
    <property type="evidence" value="ECO:0007669"/>
    <property type="project" value="TreeGrafter"/>
</dbReference>
<dbReference type="CDD" id="cd00290">
    <property type="entry name" value="cytochrome_b_C"/>
    <property type="match status" value="1"/>
</dbReference>
<dbReference type="CDD" id="cd00284">
    <property type="entry name" value="Cytochrome_b_N"/>
    <property type="match status" value="1"/>
</dbReference>
<dbReference type="FunFam" id="1.20.810.10:FF:000002">
    <property type="entry name" value="Cytochrome b"/>
    <property type="match status" value="1"/>
</dbReference>
<dbReference type="Gene3D" id="1.20.810.10">
    <property type="entry name" value="Cytochrome Bc1 Complex, Chain C"/>
    <property type="match status" value="1"/>
</dbReference>
<dbReference type="InterPro" id="IPR005798">
    <property type="entry name" value="Cyt_b/b6_C"/>
</dbReference>
<dbReference type="InterPro" id="IPR036150">
    <property type="entry name" value="Cyt_b/b6_C_sf"/>
</dbReference>
<dbReference type="InterPro" id="IPR005797">
    <property type="entry name" value="Cyt_b/b6_N"/>
</dbReference>
<dbReference type="InterPro" id="IPR027387">
    <property type="entry name" value="Cytb/b6-like_sf"/>
</dbReference>
<dbReference type="InterPro" id="IPR030689">
    <property type="entry name" value="Cytochrome_b"/>
</dbReference>
<dbReference type="InterPro" id="IPR048260">
    <property type="entry name" value="Cytochrome_b_C_euk/bac"/>
</dbReference>
<dbReference type="InterPro" id="IPR048259">
    <property type="entry name" value="Cytochrome_b_N_euk/bac"/>
</dbReference>
<dbReference type="InterPro" id="IPR016174">
    <property type="entry name" value="Di-haem_cyt_TM"/>
</dbReference>
<dbReference type="PANTHER" id="PTHR19271">
    <property type="entry name" value="CYTOCHROME B"/>
    <property type="match status" value="1"/>
</dbReference>
<dbReference type="PANTHER" id="PTHR19271:SF16">
    <property type="entry name" value="CYTOCHROME B"/>
    <property type="match status" value="1"/>
</dbReference>
<dbReference type="Pfam" id="PF00032">
    <property type="entry name" value="Cytochrom_B_C"/>
    <property type="match status" value="1"/>
</dbReference>
<dbReference type="Pfam" id="PF00033">
    <property type="entry name" value="Cytochrome_B"/>
    <property type="match status" value="1"/>
</dbReference>
<dbReference type="PIRSF" id="PIRSF038885">
    <property type="entry name" value="COB"/>
    <property type="match status" value="1"/>
</dbReference>
<dbReference type="SUPFAM" id="SSF81648">
    <property type="entry name" value="a domain/subunit of cytochrome bc1 complex (Ubiquinol-cytochrome c reductase)"/>
    <property type="match status" value="1"/>
</dbReference>
<dbReference type="SUPFAM" id="SSF81342">
    <property type="entry name" value="Transmembrane di-heme cytochromes"/>
    <property type="match status" value="1"/>
</dbReference>
<dbReference type="PROSITE" id="PS51003">
    <property type="entry name" value="CYTB_CTER"/>
    <property type="match status" value="1"/>
</dbReference>
<dbReference type="PROSITE" id="PS51002">
    <property type="entry name" value="CYTB_NTER"/>
    <property type="match status" value="1"/>
</dbReference>
<evidence type="ECO:0000250" key="1"/>
<evidence type="ECO:0000250" key="2">
    <source>
        <dbReference type="UniProtKB" id="P00157"/>
    </source>
</evidence>
<evidence type="ECO:0000255" key="3">
    <source>
        <dbReference type="PROSITE-ProRule" id="PRU00967"/>
    </source>
</evidence>
<evidence type="ECO:0000255" key="4">
    <source>
        <dbReference type="PROSITE-ProRule" id="PRU00968"/>
    </source>
</evidence>
<reference key="1">
    <citation type="journal article" date="2003" name="Genes Genet. Syst.">
        <title>Molecular phylogeny of Japanese Rhinolophidae based on variations in the complete sequence of the mitochondrial cytochrome b gene.</title>
        <authorList>
            <person name="Sakai T."/>
            <person name="Kikkawa Y."/>
            <person name="Tuchiya K."/>
            <person name="Harada M."/>
            <person name="Kanoe M."/>
            <person name="Yoshiyuki M."/>
            <person name="Yonekawa H."/>
        </authorList>
    </citation>
    <scope>NUCLEOTIDE SEQUENCE [GENOMIC DNA]</scope>
</reference>
<reference key="2">
    <citation type="journal article" date="2003" name="Mol. Phylogenet. Evol.">
        <title>The status of the Japanese and East Asian bats of the genus Myotis (Vespertilionidae) based on mitochondrial sequences.</title>
        <authorList>
            <person name="Kawai K."/>
            <person name="Nikaido M."/>
            <person name="Harada M."/>
            <person name="Matsumura S."/>
            <person name="Lin L."/>
            <person name="Wu Y."/>
            <person name="Hasegawa M."/>
            <person name="Okada N."/>
        </authorList>
    </citation>
    <scope>NUCLEOTIDE SEQUENCE [GENOMIC DNA]</scope>
</reference>
<protein>
    <recommendedName>
        <fullName>Cytochrome b</fullName>
    </recommendedName>
    <alternativeName>
        <fullName>Complex III subunit 3</fullName>
    </alternativeName>
    <alternativeName>
        <fullName>Complex III subunit III</fullName>
    </alternativeName>
    <alternativeName>
        <fullName>Cytochrome b-c1 complex subunit 3</fullName>
    </alternativeName>
    <alternativeName>
        <fullName>Ubiquinol-cytochrome-c reductase complex cytochrome b subunit</fullName>
    </alternativeName>
</protein>
<gene>
    <name type="primary">MT-CYB</name>
    <name type="synonym">COB</name>
    <name type="synonym">CYTB</name>
    <name type="synonym">MTCYB</name>
</gene>
<organism>
    <name type="scientific">Myotis macrodactylus</name>
    <name type="common">Big-footed bat</name>
    <dbReference type="NCBI Taxonomy" id="187014"/>
    <lineage>
        <taxon>Eukaryota</taxon>
        <taxon>Metazoa</taxon>
        <taxon>Chordata</taxon>
        <taxon>Craniata</taxon>
        <taxon>Vertebrata</taxon>
        <taxon>Euteleostomi</taxon>
        <taxon>Mammalia</taxon>
        <taxon>Eutheria</taxon>
        <taxon>Laurasiatheria</taxon>
        <taxon>Chiroptera</taxon>
        <taxon>Yangochiroptera</taxon>
        <taxon>Vespertilionidae</taxon>
        <taxon>Myotis</taxon>
    </lineage>
</organism>
<name>CYB_MYOMC</name>
<keyword id="KW-0249">Electron transport</keyword>
<keyword id="KW-0349">Heme</keyword>
<keyword id="KW-0408">Iron</keyword>
<keyword id="KW-0472">Membrane</keyword>
<keyword id="KW-0479">Metal-binding</keyword>
<keyword id="KW-0496">Mitochondrion</keyword>
<keyword id="KW-0999">Mitochondrion inner membrane</keyword>
<keyword id="KW-0679">Respiratory chain</keyword>
<keyword id="KW-0812">Transmembrane</keyword>
<keyword id="KW-1133">Transmembrane helix</keyword>
<keyword id="KW-0813">Transport</keyword>
<keyword id="KW-0830">Ubiquinone</keyword>
<feature type="chain" id="PRO_0000061243" description="Cytochrome b">
    <location>
        <begin position="1"/>
        <end position="379"/>
    </location>
</feature>
<feature type="transmembrane region" description="Helical" evidence="2">
    <location>
        <begin position="33"/>
        <end position="53"/>
    </location>
</feature>
<feature type="transmembrane region" description="Helical" evidence="2">
    <location>
        <begin position="77"/>
        <end position="98"/>
    </location>
</feature>
<feature type="transmembrane region" description="Helical" evidence="2">
    <location>
        <begin position="113"/>
        <end position="133"/>
    </location>
</feature>
<feature type="transmembrane region" description="Helical" evidence="2">
    <location>
        <begin position="178"/>
        <end position="198"/>
    </location>
</feature>
<feature type="transmembrane region" description="Helical" evidence="2">
    <location>
        <begin position="226"/>
        <end position="246"/>
    </location>
</feature>
<feature type="transmembrane region" description="Helical" evidence="2">
    <location>
        <begin position="288"/>
        <end position="308"/>
    </location>
</feature>
<feature type="transmembrane region" description="Helical" evidence="2">
    <location>
        <begin position="320"/>
        <end position="340"/>
    </location>
</feature>
<feature type="transmembrane region" description="Helical" evidence="2">
    <location>
        <begin position="347"/>
        <end position="367"/>
    </location>
</feature>
<feature type="binding site" description="axial binding residue" evidence="2">
    <location>
        <position position="83"/>
    </location>
    <ligand>
        <name>heme b</name>
        <dbReference type="ChEBI" id="CHEBI:60344"/>
        <label>b562</label>
    </ligand>
    <ligandPart>
        <name>Fe</name>
        <dbReference type="ChEBI" id="CHEBI:18248"/>
    </ligandPart>
</feature>
<feature type="binding site" description="axial binding residue" evidence="2">
    <location>
        <position position="97"/>
    </location>
    <ligand>
        <name>heme b</name>
        <dbReference type="ChEBI" id="CHEBI:60344"/>
        <label>b566</label>
    </ligand>
    <ligandPart>
        <name>Fe</name>
        <dbReference type="ChEBI" id="CHEBI:18248"/>
    </ligandPart>
</feature>
<feature type="binding site" description="axial binding residue" evidence="2">
    <location>
        <position position="182"/>
    </location>
    <ligand>
        <name>heme b</name>
        <dbReference type="ChEBI" id="CHEBI:60344"/>
        <label>b562</label>
    </ligand>
    <ligandPart>
        <name>Fe</name>
        <dbReference type="ChEBI" id="CHEBI:18248"/>
    </ligandPart>
</feature>
<feature type="binding site" description="axial binding residue" evidence="2">
    <location>
        <position position="196"/>
    </location>
    <ligand>
        <name>heme b</name>
        <dbReference type="ChEBI" id="CHEBI:60344"/>
        <label>b566</label>
    </ligand>
    <ligandPart>
        <name>Fe</name>
        <dbReference type="ChEBI" id="CHEBI:18248"/>
    </ligandPart>
</feature>
<feature type="binding site" evidence="2">
    <location>
        <position position="201"/>
    </location>
    <ligand>
        <name>a ubiquinone</name>
        <dbReference type="ChEBI" id="CHEBI:16389"/>
    </ligand>
</feature>
<accession>Q8HQE8</accession>
<sequence length="379" mass="42793">MTNIRKSHPLMKIINSSFIDLPAPSNISSWWNFGSLLGICLALQILTGLFLAMHYTSDTATAFNSVTHICRDVNYGWILRYLHANGASMFFICLYLHVGRGLYYGSYMYTETWNIGVILLFAVMATAFMGYVLPWGQMSFWGATVITNLLSAIPYIGTDLVEWIWGGFSVDKATLTRFFAFHFLLPFIISAMVMVHLLFLHETGSNNPTGIPSNMDMIPFHPYYTIKDILGMLLMITALLTLVLFSPDMLGDPDNYTPANPLNTPPHIKPEWYFLFAYAILRSIPNKLGGVLALVLSILILIIIPLLHTSKQRSMTFRPLSQCLFWLLAADLLTLTWIGGQPVEHPYVIIGQLASILYFSIIIILMPLTSLVENYLLKW</sequence>